<name>RRF_PHOPR</name>
<evidence type="ECO:0000255" key="1">
    <source>
        <dbReference type="HAMAP-Rule" id="MF_00040"/>
    </source>
</evidence>
<gene>
    <name evidence="1" type="primary">frr</name>
    <name type="ordered locus">PBPRA2965</name>
</gene>
<proteinExistence type="inferred from homology"/>
<organism>
    <name type="scientific">Photobacterium profundum (strain SS9)</name>
    <dbReference type="NCBI Taxonomy" id="298386"/>
    <lineage>
        <taxon>Bacteria</taxon>
        <taxon>Pseudomonadati</taxon>
        <taxon>Pseudomonadota</taxon>
        <taxon>Gammaproteobacteria</taxon>
        <taxon>Vibrionales</taxon>
        <taxon>Vibrionaceae</taxon>
        <taxon>Photobacterium</taxon>
    </lineage>
</organism>
<reference key="1">
    <citation type="journal article" date="2005" name="Science">
        <title>Life at depth: Photobacterium profundum genome sequence and expression analysis.</title>
        <authorList>
            <person name="Vezzi A."/>
            <person name="Campanaro S."/>
            <person name="D'Angelo M."/>
            <person name="Simonato F."/>
            <person name="Vitulo N."/>
            <person name="Lauro F.M."/>
            <person name="Cestaro A."/>
            <person name="Malacrida G."/>
            <person name="Simionati B."/>
            <person name="Cannata N."/>
            <person name="Romualdi C."/>
            <person name="Bartlett D.H."/>
            <person name="Valle G."/>
        </authorList>
    </citation>
    <scope>NUCLEOTIDE SEQUENCE [LARGE SCALE GENOMIC DNA]</scope>
    <source>
        <strain>ATCC BAA-1253 / SS9</strain>
    </source>
</reference>
<accession>Q6LN27</accession>
<feature type="chain" id="PRO_0000167512" description="Ribosome-recycling factor">
    <location>
        <begin position="1"/>
        <end position="185"/>
    </location>
</feature>
<protein>
    <recommendedName>
        <fullName evidence="1">Ribosome-recycling factor</fullName>
        <shortName evidence="1">RRF</shortName>
    </recommendedName>
    <alternativeName>
        <fullName evidence="1">Ribosome-releasing factor</fullName>
    </alternativeName>
</protein>
<dbReference type="EMBL" id="CR378672">
    <property type="protein sequence ID" value="CAG21299.1"/>
    <property type="molecule type" value="Genomic_DNA"/>
</dbReference>
<dbReference type="RefSeq" id="WP_011219566.1">
    <property type="nucleotide sequence ID" value="NC_006370.1"/>
</dbReference>
<dbReference type="SMR" id="Q6LN27"/>
<dbReference type="STRING" id="298386.PBPRA2965"/>
<dbReference type="KEGG" id="ppr:PBPRA2965"/>
<dbReference type="eggNOG" id="COG0233">
    <property type="taxonomic scope" value="Bacteria"/>
</dbReference>
<dbReference type="HOGENOM" id="CLU_073981_2_0_6"/>
<dbReference type="Proteomes" id="UP000000593">
    <property type="component" value="Chromosome 1"/>
</dbReference>
<dbReference type="GO" id="GO:0005829">
    <property type="term" value="C:cytosol"/>
    <property type="evidence" value="ECO:0007669"/>
    <property type="project" value="GOC"/>
</dbReference>
<dbReference type="GO" id="GO:0043023">
    <property type="term" value="F:ribosomal large subunit binding"/>
    <property type="evidence" value="ECO:0007669"/>
    <property type="project" value="TreeGrafter"/>
</dbReference>
<dbReference type="GO" id="GO:0002184">
    <property type="term" value="P:cytoplasmic translational termination"/>
    <property type="evidence" value="ECO:0007669"/>
    <property type="project" value="TreeGrafter"/>
</dbReference>
<dbReference type="CDD" id="cd00520">
    <property type="entry name" value="RRF"/>
    <property type="match status" value="1"/>
</dbReference>
<dbReference type="FunFam" id="1.10.132.20:FF:000001">
    <property type="entry name" value="Ribosome-recycling factor"/>
    <property type="match status" value="1"/>
</dbReference>
<dbReference type="FunFam" id="3.30.1360.40:FF:000001">
    <property type="entry name" value="Ribosome-recycling factor"/>
    <property type="match status" value="1"/>
</dbReference>
<dbReference type="Gene3D" id="3.30.1360.40">
    <property type="match status" value="1"/>
</dbReference>
<dbReference type="Gene3D" id="1.10.132.20">
    <property type="entry name" value="Ribosome-recycling factor"/>
    <property type="match status" value="1"/>
</dbReference>
<dbReference type="HAMAP" id="MF_00040">
    <property type="entry name" value="RRF"/>
    <property type="match status" value="1"/>
</dbReference>
<dbReference type="InterPro" id="IPR002661">
    <property type="entry name" value="Ribosome_recyc_fac"/>
</dbReference>
<dbReference type="InterPro" id="IPR023584">
    <property type="entry name" value="Ribosome_recyc_fac_dom"/>
</dbReference>
<dbReference type="InterPro" id="IPR036191">
    <property type="entry name" value="RRF_sf"/>
</dbReference>
<dbReference type="NCBIfam" id="TIGR00496">
    <property type="entry name" value="frr"/>
    <property type="match status" value="1"/>
</dbReference>
<dbReference type="PANTHER" id="PTHR20982:SF3">
    <property type="entry name" value="MITOCHONDRIAL RIBOSOME RECYCLING FACTOR PSEUDO 1"/>
    <property type="match status" value="1"/>
</dbReference>
<dbReference type="PANTHER" id="PTHR20982">
    <property type="entry name" value="RIBOSOME RECYCLING FACTOR"/>
    <property type="match status" value="1"/>
</dbReference>
<dbReference type="Pfam" id="PF01765">
    <property type="entry name" value="RRF"/>
    <property type="match status" value="1"/>
</dbReference>
<dbReference type="SUPFAM" id="SSF55194">
    <property type="entry name" value="Ribosome recycling factor, RRF"/>
    <property type="match status" value="1"/>
</dbReference>
<sequence length="185" mass="20958">MINEIQNDAQERMGKSVDALKNQLVKIRTGRAHPSLLDTIYVEYYGANTPLKQLANVVAEDSRTLAITVFDRELTPKIEKAIMMSDLGLNPMSAGTVIRVPLPPLTEERRRDLVKIVRKEAEQGRVAIRNIRRDANADLKALLKDKEISEDDDRRAQDEIQKLTDVAVKNIEAVLEVKEKELMEV</sequence>
<keyword id="KW-0963">Cytoplasm</keyword>
<keyword id="KW-0648">Protein biosynthesis</keyword>
<keyword id="KW-1185">Reference proteome</keyword>
<comment type="function">
    <text evidence="1">Responsible for the release of ribosomes from messenger RNA at the termination of protein biosynthesis. May increase the efficiency of translation by recycling ribosomes from one round of translation to another.</text>
</comment>
<comment type="subcellular location">
    <subcellularLocation>
        <location evidence="1">Cytoplasm</location>
    </subcellularLocation>
</comment>
<comment type="similarity">
    <text evidence="1">Belongs to the RRF family.</text>
</comment>